<reference key="1">
    <citation type="submission" date="2006-02" db="EMBL/GenBank/DDBJ databases">
        <title>Complete sequence of chromosome of Rhodoferax ferrireducens DSM 15236.</title>
        <authorList>
            <person name="Copeland A."/>
            <person name="Lucas S."/>
            <person name="Lapidus A."/>
            <person name="Barry K."/>
            <person name="Detter J.C."/>
            <person name="Glavina del Rio T."/>
            <person name="Hammon N."/>
            <person name="Israni S."/>
            <person name="Pitluck S."/>
            <person name="Brettin T."/>
            <person name="Bruce D."/>
            <person name="Han C."/>
            <person name="Tapia R."/>
            <person name="Gilna P."/>
            <person name="Kiss H."/>
            <person name="Schmutz J."/>
            <person name="Larimer F."/>
            <person name="Land M."/>
            <person name="Kyrpides N."/>
            <person name="Ivanova N."/>
            <person name="Richardson P."/>
        </authorList>
    </citation>
    <scope>NUCLEOTIDE SEQUENCE [LARGE SCALE GENOMIC DNA]</scope>
    <source>
        <strain>ATCC BAA-621 / DSM 15236 / T118</strain>
    </source>
</reference>
<comment type="function">
    <text evidence="1">Specifically dimethylates two adjacent adenosines (A1518 and A1519) in the loop of a conserved hairpin near the 3'-end of 16S rRNA in the 30S particle. May play a critical role in biogenesis of 30S subunits.</text>
</comment>
<comment type="catalytic activity">
    <reaction evidence="1">
        <text>adenosine(1518)/adenosine(1519) in 16S rRNA + 4 S-adenosyl-L-methionine = N(6)-dimethyladenosine(1518)/N(6)-dimethyladenosine(1519) in 16S rRNA + 4 S-adenosyl-L-homocysteine + 4 H(+)</text>
        <dbReference type="Rhea" id="RHEA:19609"/>
        <dbReference type="Rhea" id="RHEA-COMP:10232"/>
        <dbReference type="Rhea" id="RHEA-COMP:10233"/>
        <dbReference type="ChEBI" id="CHEBI:15378"/>
        <dbReference type="ChEBI" id="CHEBI:57856"/>
        <dbReference type="ChEBI" id="CHEBI:59789"/>
        <dbReference type="ChEBI" id="CHEBI:74411"/>
        <dbReference type="ChEBI" id="CHEBI:74493"/>
        <dbReference type="EC" id="2.1.1.182"/>
    </reaction>
</comment>
<comment type="subcellular location">
    <subcellularLocation>
        <location evidence="1">Cytoplasm</location>
    </subcellularLocation>
</comment>
<comment type="similarity">
    <text evidence="1">Belongs to the class I-like SAM-binding methyltransferase superfamily. rRNA adenine N(6)-methyltransferase family. RsmA subfamily.</text>
</comment>
<keyword id="KW-0963">Cytoplasm</keyword>
<keyword id="KW-0489">Methyltransferase</keyword>
<keyword id="KW-1185">Reference proteome</keyword>
<keyword id="KW-0694">RNA-binding</keyword>
<keyword id="KW-0698">rRNA processing</keyword>
<keyword id="KW-0949">S-adenosyl-L-methionine</keyword>
<keyword id="KW-0808">Transferase</keyword>
<evidence type="ECO:0000255" key="1">
    <source>
        <dbReference type="HAMAP-Rule" id="MF_00607"/>
    </source>
</evidence>
<feature type="chain" id="PRO_0000257332" description="Ribosomal RNA small subunit methyltransferase A">
    <location>
        <begin position="1"/>
        <end position="261"/>
    </location>
</feature>
<feature type="binding site" evidence="1">
    <location>
        <position position="12"/>
    </location>
    <ligand>
        <name>S-adenosyl-L-methionine</name>
        <dbReference type="ChEBI" id="CHEBI:59789"/>
    </ligand>
</feature>
<feature type="binding site" evidence="1">
    <location>
        <position position="14"/>
    </location>
    <ligand>
        <name>S-adenosyl-L-methionine</name>
        <dbReference type="ChEBI" id="CHEBI:59789"/>
    </ligand>
</feature>
<feature type="binding site" evidence="1">
    <location>
        <position position="39"/>
    </location>
    <ligand>
        <name>S-adenosyl-L-methionine</name>
        <dbReference type="ChEBI" id="CHEBI:59789"/>
    </ligand>
</feature>
<feature type="binding site" evidence="1">
    <location>
        <position position="60"/>
    </location>
    <ligand>
        <name>S-adenosyl-L-methionine</name>
        <dbReference type="ChEBI" id="CHEBI:59789"/>
    </ligand>
</feature>
<feature type="binding site" evidence="1">
    <location>
        <position position="81"/>
    </location>
    <ligand>
        <name>S-adenosyl-L-methionine</name>
        <dbReference type="ChEBI" id="CHEBI:59789"/>
    </ligand>
</feature>
<feature type="binding site" evidence="1">
    <location>
        <position position="104"/>
    </location>
    <ligand>
        <name>S-adenosyl-L-methionine</name>
        <dbReference type="ChEBI" id="CHEBI:59789"/>
    </ligand>
</feature>
<dbReference type="EC" id="2.1.1.182" evidence="1"/>
<dbReference type="EMBL" id="CP000267">
    <property type="protein sequence ID" value="ABD67857.1"/>
    <property type="molecule type" value="Genomic_DNA"/>
</dbReference>
<dbReference type="RefSeq" id="WP_011462430.1">
    <property type="nucleotide sequence ID" value="NC_007908.1"/>
</dbReference>
<dbReference type="SMR" id="Q223E6"/>
<dbReference type="STRING" id="338969.Rfer_0096"/>
<dbReference type="KEGG" id="rfr:Rfer_0096"/>
<dbReference type="eggNOG" id="COG0030">
    <property type="taxonomic scope" value="Bacteria"/>
</dbReference>
<dbReference type="HOGENOM" id="CLU_041220_0_1_4"/>
<dbReference type="OrthoDB" id="9814755at2"/>
<dbReference type="Proteomes" id="UP000008332">
    <property type="component" value="Chromosome"/>
</dbReference>
<dbReference type="GO" id="GO:0005829">
    <property type="term" value="C:cytosol"/>
    <property type="evidence" value="ECO:0007669"/>
    <property type="project" value="TreeGrafter"/>
</dbReference>
<dbReference type="GO" id="GO:0052908">
    <property type="term" value="F:16S rRNA (adenine(1518)-N(6)/adenine(1519)-N(6))-dimethyltransferase activity"/>
    <property type="evidence" value="ECO:0007669"/>
    <property type="project" value="UniProtKB-EC"/>
</dbReference>
<dbReference type="GO" id="GO:0003723">
    <property type="term" value="F:RNA binding"/>
    <property type="evidence" value="ECO:0007669"/>
    <property type="project" value="UniProtKB-KW"/>
</dbReference>
<dbReference type="Gene3D" id="1.10.8.100">
    <property type="entry name" value="Ribosomal RNA adenine dimethylase-like, domain 2"/>
    <property type="match status" value="1"/>
</dbReference>
<dbReference type="Gene3D" id="3.40.50.150">
    <property type="entry name" value="Vaccinia Virus protein VP39"/>
    <property type="match status" value="1"/>
</dbReference>
<dbReference type="HAMAP" id="MF_00607">
    <property type="entry name" value="16SrRNA_methyltr_A"/>
    <property type="match status" value="1"/>
</dbReference>
<dbReference type="InterPro" id="IPR001737">
    <property type="entry name" value="KsgA/Erm"/>
</dbReference>
<dbReference type="InterPro" id="IPR023165">
    <property type="entry name" value="rRNA_Ade_diMease-like_C"/>
</dbReference>
<dbReference type="InterPro" id="IPR020596">
    <property type="entry name" value="rRNA_Ade_Mease_Trfase_CS"/>
</dbReference>
<dbReference type="InterPro" id="IPR020598">
    <property type="entry name" value="rRNA_Ade_methylase_Trfase_N"/>
</dbReference>
<dbReference type="InterPro" id="IPR011530">
    <property type="entry name" value="rRNA_adenine_dimethylase"/>
</dbReference>
<dbReference type="InterPro" id="IPR029063">
    <property type="entry name" value="SAM-dependent_MTases_sf"/>
</dbReference>
<dbReference type="NCBIfam" id="TIGR00755">
    <property type="entry name" value="ksgA"/>
    <property type="match status" value="1"/>
</dbReference>
<dbReference type="PANTHER" id="PTHR11727">
    <property type="entry name" value="DIMETHYLADENOSINE TRANSFERASE"/>
    <property type="match status" value="1"/>
</dbReference>
<dbReference type="PANTHER" id="PTHR11727:SF7">
    <property type="entry name" value="DIMETHYLADENOSINE TRANSFERASE-RELATED"/>
    <property type="match status" value="1"/>
</dbReference>
<dbReference type="Pfam" id="PF00398">
    <property type="entry name" value="RrnaAD"/>
    <property type="match status" value="1"/>
</dbReference>
<dbReference type="SMART" id="SM00650">
    <property type="entry name" value="rADc"/>
    <property type="match status" value="1"/>
</dbReference>
<dbReference type="SUPFAM" id="SSF53335">
    <property type="entry name" value="S-adenosyl-L-methionine-dependent methyltransferases"/>
    <property type="match status" value="1"/>
</dbReference>
<dbReference type="PROSITE" id="PS01131">
    <property type="entry name" value="RRNA_A_DIMETH"/>
    <property type="match status" value="1"/>
</dbReference>
<dbReference type="PROSITE" id="PS51689">
    <property type="entry name" value="SAM_RNA_A_N6_MT"/>
    <property type="match status" value="1"/>
</dbReference>
<proteinExistence type="inferred from homology"/>
<name>RSMA_ALBFT</name>
<accession>Q223E6</accession>
<sequence>MKHIARKRFGQHFLTDGAMIEAIVDAIGPRPGQAMVEIGPGLAALTQPLVERLGQLTVIELDRDLAARLRAHPQLVVIESDVLKVDFAQVAQALTTTKLRVVGNLPYNISTPILFHLLNFIDVIEDQHFMLQKEVIDRMVAGPCTAAYGRLSVMLQWRYAMENVLLVPPESFEPPPRVNSAVVRMVPHVNPAAVDGHLLSELVQVAFSQRRKLLRHTLGQWLQQKGYADEFDVQRRAEEVPVAEYLALALKLATHSQAASH</sequence>
<gene>
    <name evidence="1" type="primary">rsmA</name>
    <name evidence="1" type="synonym">ksgA</name>
    <name type="ordered locus">Rfer_0096</name>
</gene>
<protein>
    <recommendedName>
        <fullName evidence="1">Ribosomal RNA small subunit methyltransferase A</fullName>
        <ecNumber evidence="1">2.1.1.182</ecNumber>
    </recommendedName>
    <alternativeName>
        <fullName evidence="1">16S rRNA (adenine(1518)-N(6)/adenine(1519)-N(6))-dimethyltransferase</fullName>
    </alternativeName>
    <alternativeName>
        <fullName evidence="1">16S rRNA dimethyladenosine transferase</fullName>
    </alternativeName>
    <alternativeName>
        <fullName evidence="1">16S rRNA dimethylase</fullName>
    </alternativeName>
    <alternativeName>
        <fullName evidence="1">S-adenosylmethionine-6-N', N'-adenosyl(rRNA) dimethyltransferase</fullName>
    </alternativeName>
</protein>
<organism>
    <name type="scientific">Albidiferax ferrireducens (strain ATCC BAA-621 / DSM 15236 / T118)</name>
    <name type="common">Rhodoferax ferrireducens</name>
    <dbReference type="NCBI Taxonomy" id="338969"/>
    <lineage>
        <taxon>Bacteria</taxon>
        <taxon>Pseudomonadati</taxon>
        <taxon>Pseudomonadota</taxon>
        <taxon>Betaproteobacteria</taxon>
        <taxon>Burkholderiales</taxon>
        <taxon>Comamonadaceae</taxon>
        <taxon>Rhodoferax</taxon>
    </lineage>
</organism>